<comment type="function">
    <text evidence="1">Part of the ABC transporter complex LsrABCD involved in autoinducer 2 (AI-2) import. Probably responsible for the translocation of the substrate across the membrane (By similarity).</text>
</comment>
<comment type="subunit">
    <text evidence="1">The complex is composed of two ATP-binding proteins (LsrA), two transmembrane proteins (LsrC and LsrD) and a solute-binding protein (LsrB).</text>
</comment>
<comment type="subcellular location">
    <subcellularLocation>
        <location evidence="1">Cell inner membrane</location>
        <topology evidence="1">Multi-pass membrane protein</topology>
    </subcellularLocation>
</comment>
<comment type="similarity">
    <text evidence="3">Belongs to the binding-protein-dependent transport system permease family. AraH/RbsC subfamily.</text>
</comment>
<proteinExistence type="inferred from homology"/>
<organism>
    <name type="scientific">Escherichia coli (strain SMS-3-5 / SECEC)</name>
    <dbReference type="NCBI Taxonomy" id="439855"/>
    <lineage>
        <taxon>Bacteria</taxon>
        <taxon>Pseudomonadati</taxon>
        <taxon>Pseudomonadota</taxon>
        <taxon>Gammaproteobacteria</taxon>
        <taxon>Enterobacterales</taxon>
        <taxon>Enterobacteriaceae</taxon>
        <taxon>Escherichia</taxon>
    </lineage>
</organism>
<sequence length="330" mass="34442">MRIRYGWELALAALLVIEIVAFGAINPRMLDLNMLLFSTSDFICIGIVALPLTMVIVSGGIDISFGSTIGLCAIALGVLFQSGVPMPLAILLTLLLGALCGLINAGLIIYTKVNPLVITLGTLYLFAGSALLLSGMAGATGYEGIGGFPMAFTDFANLDVLGLPVPLIIFLICLLVFWLWLHKTHAGRNVFLIGQSPRVAVYSAIPVNRTLCALYAMTGLASAVAAVLLVSYFGSARSDLGASFLMPAITAVVLGGANIYGGSGSIIGTAIAVLLVGYLQQGLQMAGVPNQVSSALSGALLIVVVVGRSVSLHRQQIKEWLARRANNPLP</sequence>
<protein>
    <recommendedName>
        <fullName>Autoinducer 2 import system permease protein LsrD</fullName>
        <shortName>AI-2 import system permease protein LsrD</shortName>
    </recommendedName>
</protein>
<accession>B1LFA0</accession>
<dbReference type="EMBL" id="CP000970">
    <property type="protein sequence ID" value="ACB16868.1"/>
    <property type="molecule type" value="Genomic_DNA"/>
</dbReference>
<dbReference type="RefSeq" id="WP_001222725.1">
    <property type="nucleotide sequence ID" value="NC_010498.1"/>
</dbReference>
<dbReference type="KEGG" id="ecm:EcSMS35_1657"/>
<dbReference type="HOGENOM" id="CLU_028880_0_0_6"/>
<dbReference type="Proteomes" id="UP000007011">
    <property type="component" value="Chromosome"/>
</dbReference>
<dbReference type="GO" id="GO:0005886">
    <property type="term" value="C:plasma membrane"/>
    <property type="evidence" value="ECO:0007669"/>
    <property type="project" value="UniProtKB-SubCell"/>
</dbReference>
<dbReference type="GO" id="GO:0022857">
    <property type="term" value="F:transmembrane transporter activity"/>
    <property type="evidence" value="ECO:0007669"/>
    <property type="project" value="InterPro"/>
</dbReference>
<dbReference type="CDD" id="cd06579">
    <property type="entry name" value="TM_PBP1_transp_AraH_like"/>
    <property type="match status" value="1"/>
</dbReference>
<dbReference type="InterPro" id="IPR001851">
    <property type="entry name" value="ABC_transp_permease"/>
</dbReference>
<dbReference type="NCBIfam" id="NF011612">
    <property type="entry name" value="PRK15038.1"/>
    <property type="match status" value="1"/>
</dbReference>
<dbReference type="PANTHER" id="PTHR32196">
    <property type="entry name" value="ABC TRANSPORTER PERMEASE PROTEIN YPHD-RELATED-RELATED"/>
    <property type="match status" value="1"/>
</dbReference>
<dbReference type="PANTHER" id="PTHR32196:SF71">
    <property type="entry name" value="AUTOINDUCER 2 IMPORT SYSTEM PERMEASE PROTEIN LSRD"/>
    <property type="match status" value="1"/>
</dbReference>
<dbReference type="Pfam" id="PF02653">
    <property type="entry name" value="BPD_transp_2"/>
    <property type="match status" value="1"/>
</dbReference>
<evidence type="ECO:0000250" key="1"/>
<evidence type="ECO:0000255" key="2"/>
<evidence type="ECO:0000305" key="3"/>
<reference key="1">
    <citation type="journal article" date="2008" name="J. Bacteriol.">
        <title>Insights into the environmental resistance gene pool from the genome sequence of the multidrug-resistant environmental isolate Escherichia coli SMS-3-5.</title>
        <authorList>
            <person name="Fricke W.F."/>
            <person name="Wright M.S."/>
            <person name="Lindell A.H."/>
            <person name="Harkins D.M."/>
            <person name="Baker-Austin C."/>
            <person name="Ravel J."/>
            <person name="Stepanauskas R."/>
        </authorList>
    </citation>
    <scope>NUCLEOTIDE SEQUENCE [LARGE SCALE GENOMIC DNA]</scope>
    <source>
        <strain>SMS-3-5 / SECEC</strain>
    </source>
</reference>
<name>LSRD_ECOSM</name>
<gene>
    <name type="primary">lsrD</name>
    <name type="ordered locus">EcSMS35_1657</name>
</gene>
<feature type="chain" id="PRO_0000351366" description="Autoinducer 2 import system permease protein LsrD">
    <location>
        <begin position="1"/>
        <end position="330"/>
    </location>
</feature>
<feature type="topological domain" description="Cytoplasmic" evidence="2">
    <location>
        <begin position="1"/>
        <end position="4"/>
    </location>
</feature>
<feature type="transmembrane region" description="Helical" evidence="2">
    <location>
        <begin position="5"/>
        <end position="25"/>
    </location>
</feature>
<feature type="topological domain" description="Periplasmic" evidence="2">
    <location>
        <begin position="26"/>
        <end position="42"/>
    </location>
</feature>
<feature type="transmembrane region" description="Helical" evidence="2">
    <location>
        <begin position="43"/>
        <end position="63"/>
    </location>
</feature>
<feature type="topological domain" description="Cytoplasmic" evidence="2">
    <location>
        <begin position="64"/>
        <end position="67"/>
    </location>
</feature>
<feature type="transmembrane region" description="Helical" evidence="2">
    <location>
        <begin position="68"/>
        <end position="88"/>
    </location>
</feature>
<feature type="transmembrane region" description="Helical" evidence="2">
    <location>
        <begin position="89"/>
        <end position="109"/>
    </location>
</feature>
<feature type="topological domain" description="Cytoplasmic" evidence="2">
    <location>
        <begin position="110"/>
        <end position="115"/>
    </location>
</feature>
<feature type="transmembrane region" description="Helical" evidence="2">
    <location>
        <begin position="116"/>
        <end position="136"/>
    </location>
</feature>
<feature type="topological domain" description="Periplasmic" evidence="2">
    <location>
        <begin position="137"/>
        <end position="159"/>
    </location>
</feature>
<feature type="transmembrane region" description="Helical" evidence="2">
    <location>
        <begin position="160"/>
        <end position="180"/>
    </location>
</feature>
<feature type="topological domain" description="Cytoplasmic" evidence="2">
    <location>
        <begin position="181"/>
        <end position="209"/>
    </location>
</feature>
<feature type="transmembrane region" description="Helical" evidence="2">
    <location>
        <begin position="210"/>
        <end position="230"/>
    </location>
</feature>
<feature type="topological domain" description="Periplasmic" evidence="2">
    <location>
        <begin position="231"/>
        <end position="237"/>
    </location>
</feature>
<feature type="transmembrane region" description="Helical" evidence="2">
    <location>
        <begin position="238"/>
        <end position="258"/>
    </location>
</feature>
<feature type="transmembrane region" description="Helical" evidence="2">
    <location>
        <begin position="259"/>
        <end position="279"/>
    </location>
</feature>
<feature type="topological domain" description="Periplasmic" evidence="2">
    <location>
        <begin position="280"/>
        <end position="285"/>
    </location>
</feature>
<feature type="transmembrane region" description="Helical" evidence="2">
    <location>
        <begin position="286"/>
        <end position="306"/>
    </location>
</feature>
<feature type="topological domain" description="Cytoplasmic" evidence="2">
    <location>
        <begin position="307"/>
        <end position="330"/>
    </location>
</feature>
<keyword id="KW-0997">Cell inner membrane</keyword>
<keyword id="KW-1003">Cell membrane</keyword>
<keyword id="KW-0472">Membrane</keyword>
<keyword id="KW-0812">Transmembrane</keyword>
<keyword id="KW-1133">Transmembrane helix</keyword>
<keyword id="KW-0813">Transport</keyword>